<protein>
    <recommendedName>
        <fullName evidence="1">Oxygen-dependent coproporphyrinogen-III oxidase</fullName>
        <shortName evidence="1">CPO</shortName>
        <shortName evidence="1">Coprogen oxidase</shortName>
        <shortName evidence="1">Coproporphyrinogenase</shortName>
        <ecNumber evidence="1">1.3.3.3</ecNumber>
    </recommendedName>
</protein>
<dbReference type="EC" id="1.3.3.3" evidence="1"/>
<dbReference type="EMBL" id="CP000931">
    <property type="protein sequence ID" value="ABZ74610.1"/>
    <property type="molecule type" value="Genomic_DNA"/>
</dbReference>
<dbReference type="RefSeq" id="WP_012275168.1">
    <property type="nucleotide sequence ID" value="NC_010334.1"/>
</dbReference>
<dbReference type="SMR" id="B0TLD7"/>
<dbReference type="STRING" id="458817.Shal_0034"/>
<dbReference type="KEGG" id="shl:Shal_0034"/>
<dbReference type="eggNOG" id="COG0408">
    <property type="taxonomic scope" value="Bacteria"/>
</dbReference>
<dbReference type="HOGENOM" id="CLU_026169_0_1_6"/>
<dbReference type="OrthoDB" id="9777553at2"/>
<dbReference type="UniPathway" id="UPA00251">
    <property type="reaction ID" value="UER00322"/>
</dbReference>
<dbReference type="Proteomes" id="UP000001317">
    <property type="component" value="Chromosome"/>
</dbReference>
<dbReference type="GO" id="GO:0005737">
    <property type="term" value="C:cytoplasm"/>
    <property type="evidence" value="ECO:0007669"/>
    <property type="project" value="UniProtKB-SubCell"/>
</dbReference>
<dbReference type="GO" id="GO:0004109">
    <property type="term" value="F:coproporphyrinogen oxidase activity"/>
    <property type="evidence" value="ECO:0007669"/>
    <property type="project" value="UniProtKB-UniRule"/>
</dbReference>
<dbReference type="GO" id="GO:0046872">
    <property type="term" value="F:metal ion binding"/>
    <property type="evidence" value="ECO:0007669"/>
    <property type="project" value="UniProtKB-KW"/>
</dbReference>
<dbReference type="GO" id="GO:0042803">
    <property type="term" value="F:protein homodimerization activity"/>
    <property type="evidence" value="ECO:0000250"/>
    <property type="project" value="UniProtKB"/>
</dbReference>
<dbReference type="GO" id="GO:0006782">
    <property type="term" value="P:protoporphyrinogen IX biosynthetic process"/>
    <property type="evidence" value="ECO:0007669"/>
    <property type="project" value="UniProtKB-UniRule"/>
</dbReference>
<dbReference type="FunFam" id="3.40.1500.10:FF:000001">
    <property type="entry name" value="Oxygen-dependent coproporphyrinogen-III oxidase"/>
    <property type="match status" value="1"/>
</dbReference>
<dbReference type="Gene3D" id="3.40.1500.10">
    <property type="entry name" value="Coproporphyrinogen III oxidase, aerobic"/>
    <property type="match status" value="1"/>
</dbReference>
<dbReference type="HAMAP" id="MF_00333">
    <property type="entry name" value="Coprogen_oxidas"/>
    <property type="match status" value="1"/>
</dbReference>
<dbReference type="InterPro" id="IPR001260">
    <property type="entry name" value="Coprogen_oxidase_aer"/>
</dbReference>
<dbReference type="InterPro" id="IPR036406">
    <property type="entry name" value="Coprogen_oxidase_aer_sf"/>
</dbReference>
<dbReference type="InterPro" id="IPR018375">
    <property type="entry name" value="Coprogen_oxidase_CS"/>
</dbReference>
<dbReference type="NCBIfam" id="NF003727">
    <property type="entry name" value="PRK05330.1"/>
    <property type="match status" value="1"/>
</dbReference>
<dbReference type="PANTHER" id="PTHR10755">
    <property type="entry name" value="COPROPORPHYRINOGEN III OXIDASE, MITOCHONDRIAL"/>
    <property type="match status" value="1"/>
</dbReference>
<dbReference type="PANTHER" id="PTHR10755:SF0">
    <property type="entry name" value="OXYGEN-DEPENDENT COPROPORPHYRINOGEN-III OXIDASE, MITOCHONDRIAL"/>
    <property type="match status" value="1"/>
</dbReference>
<dbReference type="Pfam" id="PF01218">
    <property type="entry name" value="Coprogen_oxidas"/>
    <property type="match status" value="1"/>
</dbReference>
<dbReference type="PIRSF" id="PIRSF000166">
    <property type="entry name" value="Coproporphyri_ox"/>
    <property type="match status" value="1"/>
</dbReference>
<dbReference type="PRINTS" id="PR00073">
    <property type="entry name" value="COPRGNOXDASE"/>
</dbReference>
<dbReference type="SUPFAM" id="SSF102886">
    <property type="entry name" value="Coproporphyrinogen III oxidase"/>
    <property type="match status" value="1"/>
</dbReference>
<dbReference type="PROSITE" id="PS01021">
    <property type="entry name" value="COPROGEN_OXIDASE"/>
    <property type="match status" value="1"/>
</dbReference>
<organism>
    <name type="scientific">Shewanella halifaxensis (strain HAW-EB4)</name>
    <dbReference type="NCBI Taxonomy" id="458817"/>
    <lineage>
        <taxon>Bacteria</taxon>
        <taxon>Pseudomonadati</taxon>
        <taxon>Pseudomonadota</taxon>
        <taxon>Gammaproteobacteria</taxon>
        <taxon>Alteromonadales</taxon>
        <taxon>Shewanellaceae</taxon>
        <taxon>Shewanella</taxon>
    </lineage>
</organism>
<gene>
    <name evidence="1" type="primary">hemF</name>
    <name type="ordered locus">Shal_0034</name>
</gene>
<sequence length="304" mass="34296">MNAPDSTLVKAFLLDLQHRICNGLEALDGSAKFAEDAWKREEGGGGQSRVLTGGTVFEQAGVNFSHVMGASMPASATAHRPELAGRSFEAMGVSLVIHPNNPHIPTTHANVRFFIAHKDGADPVWWFGGGFDLTPYYPYLEDVVEWHQSAKSLCEPFGDEIYPEYKQWCDEYFFLPHRNETRGVGGLFFDDLNKQGFDTSFAFMQAVGNGFLTAYAPIVERRKDTVYGEHERQFQLYRRGRYVEFNLVYDRGTLFGLQTGGRTESILMSMPPLVRWEYAYTPEAGSAEAALYSDYLKPRDWLTL</sequence>
<accession>B0TLD7</accession>
<proteinExistence type="inferred from homology"/>
<comment type="function">
    <text evidence="1">Involved in the heme biosynthesis. Catalyzes the aerobic oxidative decarboxylation of propionate groups of rings A and B of coproporphyrinogen-III to yield the vinyl groups in protoporphyrinogen-IX.</text>
</comment>
<comment type="catalytic activity">
    <reaction evidence="1">
        <text>coproporphyrinogen III + O2 + 2 H(+) = protoporphyrinogen IX + 2 CO2 + 2 H2O</text>
        <dbReference type="Rhea" id="RHEA:18257"/>
        <dbReference type="ChEBI" id="CHEBI:15377"/>
        <dbReference type="ChEBI" id="CHEBI:15378"/>
        <dbReference type="ChEBI" id="CHEBI:15379"/>
        <dbReference type="ChEBI" id="CHEBI:16526"/>
        <dbReference type="ChEBI" id="CHEBI:57307"/>
        <dbReference type="ChEBI" id="CHEBI:57309"/>
        <dbReference type="EC" id="1.3.3.3"/>
    </reaction>
</comment>
<comment type="cofactor">
    <cofactor evidence="1">
        <name>a divalent metal cation</name>
        <dbReference type="ChEBI" id="CHEBI:60240"/>
    </cofactor>
</comment>
<comment type="pathway">
    <text evidence="1">Porphyrin-containing compound metabolism; protoporphyrin-IX biosynthesis; protoporphyrinogen-IX from coproporphyrinogen-III (O2 route): step 1/1.</text>
</comment>
<comment type="subunit">
    <text evidence="1">Homodimer.</text>
</comment>
<comment type="subcellular location">
    <subcellularLocation>
        <location evidence="1">Cytoplasm</location>
    </subcellularLocation>
</comment>
<comment type="similarity">
    <text evidence="1">Belongs to the aerobic coproporphyrinogen-III oxidase family.</text>
</comment>
<evidence type="ECO:0000255" key="1">
    <source>
        <dbReference type="HAMAP-Rule" id="MF_00333"/>
    </source>
</evidence>
<reference key="1">
    <citation type="submission" date="2008-01" db="EMBL/GenBank/DDBJ databases">
        <title>Complete sequence of Shewanella halifaxensis HAW-EB4.</title>
        <authorList>
            <consortium name="US DOE Joint Genome Institute"/>
            <person name="Copeland A."/>
            <person name="Lucas S."/>
            <person name="Lapidus A."/>
            <person name="Glavina del Rio T."/>
            <person name="Dalin E."/>
            <person name="Tice H."/>
            <person name="Bruce D."/>
            <person name="Goodwin L."/>
            <person name="Pitluck S."/>
            <person name="Sims D."/>
            <person name="Brettin T."/>
            <person name="Detter J.C."/>
            <person name="Han C."/>
            <person name="Kuske C.R."/>
            <person name="Schmutz J."/>
            <person name="Larimer F."/>
            <person name="Land M."/>
            <person name="Hauser L."/>
            <person name="Kyrpides N."/>
            <person name="Kim E."/>
            <person name="Zhao J.-S."/>
            <person name="Richardson P."/>
        </authorList>
    </citation>
    <scope>NUCLEOTIDE SEQUENCE [LARGE SCALE GENOMIC DNA]</scope>
    <source>
        <strain>HAW-EB4</strain>
    </source>
</reference>
<keyword id="KW-0963">Cytoplasm</keyword>
<keyword id="KW-0350">Heme biosynthesis</keyword>
<keyword id="KW-0479">Metal-binding</keyword>
<keyword id="KW-0560">Oxidoreductase</keyword>
<keyword id="KW-0627">Porphyrin biosynthesis</keyword>
<feature type="chain" id="PRO_1000079262" description="Oxygen-dependent coproporphyrinogen-III oxidase">
    <location>
        <begin position="1"/>
        <end position="304"/>
    </location>
</feature>
<feature type="region of interest" description="Important for dimerization" evidence="1">
    <location>
        <begin position="242"/>
        <end position="277"/>
    </location>
</feature>
<feature type="active site" description="Proton donor" evidence="1">
    <location>
        <position position="108"/>
    </location>
</feature>
<feature type="binding site" evidence="1">
    <location>
        <position position="94"/>
    </location>
    <ligand>
        <name>substrate</name>
    </ligand>
</feature>
<feature type="binding site" evidence="1">
    <location>
        <position position="98"/>
    </location>
    <ligand>
        <name>a divalent metal cation</name>
        <dbReference type="ChEBI" id="CHEBI:60240"/>
    </ligand>
</feature>
<feature type="binding site" evidence="1">
    <location>
        <position position="108"/>
    </location>
    <ligand>
        <name>a divalent metal cation</name>
        <dbReference type="ChEBI" id="CHEBI:60240"/>
    </ligand>
</feature>
<feature type="binding site" evidence="1">
    <location>
        <begin position="110"/>
        <end position="112"/>
    </location>
    <ligand>
        <name>substrate</name>
    </ligand>
</feature>
<feature type="binding site" evidence="1">
    <location>
        <position position="147"/>
    </location>
    <ligand>
        <name>a divalent metal cation</name>
        <dbReference type="ChEBI" id="CHEBI:60240"/>
    </ligand>
</feature>
<feature type="binding site" evidence="1">
    <location>
        <position position="177"/>
    </location>
    <ligand>
        <name>a divalent metal cation</name>
        <dbReference type="ChEBI" id="CHEBI:60240"/>
    </ligand>
</feature>
<feature type="binding site" evidence="1">
    <location>
        <begin position="260"/>
        <end position="262"/>
    </location>
    <ligand>
        <name>substrate</name>
    </ligand>
</feature>
<feature type="site" description="Important for dimerization" evidence="1">
    <location>
        <position position="177"/>
    </location>
</feature>
<name>HEM6_SHEHH</name>